<gene>
    <name evidence="2" type="primary">FMDH</name>
</gene>
<accession>P33677</accession>
<organism>
    <name type="scientific">Pichia angusta</name>
    <name type="common">Yeast</name>
    <name type="synonym">Hansenula polymorpha</name>
    <dbReference type="NCBI Taxonomy" id="870730"/>
    <lineage>
        <taxon>Eukaryota</taxon>
        <taxon>Fungi</taxon>
        <taxon>Dikarya</taxon>
        <taxon>Ascomycota</taxon>
        <taxon>Saccharomycotina</taxon>
        <taxon>Pichiomycetes</taxon>
        <taxon>Pichiales</taxon>
        <taxon>Pichiaceae</taxon>
        <taxon>Ogataea</taxon>
    </lineage>
</organism>
<reference key="1">
    <citation type="patent" date="1989-01-18" number="EP0299108">
        <title>DNA-molecules coding for FMDH control regions and structured gene for a protein having FMDH-activity and their uses.</title>
        <authorList>
            <person name="Hollenberg C.P."/>
            <person name="Janowicz Z."/>
        </authorList>
    </citation>
    <scope>NUCLEOTIDE SEQUENCE [GENOMIC DNA]</scope>
    <source>
        <strain>ATCC 34438 / CBS 4732 / DSM 70277 / JCM 3621 / NBRC 1476 / NRRL Y-5445</strain>
    </source>
</reference>
<comment type="function">
    <text evidence="1">Catalyzes the NAD(+)-dependent oxidation of formate to carbon dioxide. Formate oxidation is the final step in the methanol oxidation pathway in methylotrophic microorganisms. Has a role in the detoxification of exogenous formate in non-methylotrophic organisms.</text>
</comment>
<comment type="catalytic activity">
    <reaction evidence="1">
        <text>formate + NAD(+) = CO2 + NADH</text>
        <dbReference type="Rhea" id="RHEA:15985"/>
        <dbReference type="ChEBI" id="CHEBI:15740"/>
        <dbReference type="ChEBI" id="CHEBI:16526"/>
        <dbReference type="ChEBI" id="CHEBI:57540"/>
        <dbReference type="ChEBI" id="CHEBI:57945"/>
        <dbReference type="EC" id="1.17.1.9"/>
    </reaction>
</comment>
<comment type="subunit">
    <text evidence="1">Homodimer.</text>
</comment>
<comment type="subcellular location">
    <subcellularLocation>
        <location evidence="1">Cytoplasm</location>
    </subcellularLocation>
</comment>
<comment type="similarity">
    <text evidence="1">Belongs to the D-isomer specific 2-hydroxyacid dehydrogenase family. FDH subfamily.</text>
</comment>
<dbReference type="EC" id="1.17.1.9" evidence="1"/>
<dbReference type="EMBL" id="A06214">
    <property type="protein sequence ID" value="CAA00531.1"/>
    <property type="molecule type" value="Unassigned_DNA"/>
</dbReference>
<dbReference type="SMR" id="P33677"/>
<dbReference type="BRENDA" id="1.17.1.9">
    <property type="organism ID" value="2587"/>
</dbReference>
<dbReference type="GO" id="GO:0005829">
    <property type="term" value="C:cytosol"/>
    <property type="evidence" value="ECO:0007669"/>
    <property type="project" value="TreeGrafter"/>
</dbReference>
<dbReference type="GO" id="GO:0008863">
    <property type="term" value="F:formate dehydrogenase (NAD+) activity"/>
    <property type="evidence" value="ECO:0007669"/>
    <property type="project" value="UniProtKB-UniRule"/>
</dbReference>
<dbReference type="GO" id="GO:0051287">
    <property type="term" value="F:NAD binding"/>
    <property type="evidence" value="ECO:0007669"/>
    <property type="project" value="InterPro"/>
</dbReference>
<dbReference type="GO" id="GO:0016616">
    <property type="term" value="F:oxidoreductase activity, acting on the CH-OH group of donors, NAD or NADP as acceptor"/>
    <property type="evidence" value="ECO:0007669"/>
    <property type="project" value="InterPro"/>
</dbReference>
<dbReference type="GO" id="GO:0042183">
    <property type="term" value="P:formate catabolic process"/>
    <property type="evidence" value="ECO:0007669"/>
    <property type="project" value="UniProtKB-UniRule"/>
</dbReference>
<dbReference type="CDD" id="cd05302">
    <property type="entry name" value="FDH"/>
    <property type="match status" value="1"/>
</dbReference>
<dbReference type="FunFam" id="3.40.50.720:FF:000057">
    <property type="entry name" value="Formate dehydrogenase"/>
    <property type="match status" value="1"/>
</dbReference>
<dbReference type="Gene3D" id="3.40.50.720">
    <property type="entry name" value="NAD(P)-binding Rossmann-like Domain"/>
    <property type="match status" value="2"/>
</dbReference>
<dbReference type="HAMAP" id="MF_03210">
    <property type="entry name" value="Formate_dehydrogenase"/>
    <property type="match status" value="1"/>
</dbReference>
<dbReference type="InterPro" id="IPR006139">
    <property type="entry name" value="D-isomer_2_OHA_DH_cat_dom"/>
</dbReference>
<dbReference type="InterPro" id="IPR029753">
    <property type="entry name" value="D-isomer_DH_CS"/>
</dbReference>
<dbReference type="InterPro" id="IPR029752">
    <property type="entry name" value="D-isomer_DH_CS1"/>
</dbReference>
<dbReference type="InterPro" id="IPR006140">
    <property type="entry name" value="D-isomer_DH_NAD-bd"/>
</dbReference>
<dbReference type="InterPro" id="IPR033689">
    <property type="entry name" value="FDH_NAD-dep"/>
</dbReference>
<dbReference type="InterPro" id="IPR036291">
    <property type="entry name" value="NAD(P)-bd_dom_sf"/>
</dbReference>
<dbReference type="NCBIfam" id="NF005750">
    <property type="entry name" value="PRK07574.1"/>
    <property type="match status" value="1"/>
</dbReference>
<dbReference type="PANTHER" id="PTHR42938">
    <property type="entry name" value="FORMATE DEHYDROGENASE 1"/>
    <property type="match status" value="1"/>
</dbReference>
<dbReference type="PANTHER" id="PTHR42938:SF9">
    <property type="entry name" value="FORMATE DEHYDROGENASE 1"/>
    <property type="match status" value="1"/>
</dbReference>
<dbReference type="Pfam" id="PF00389">
    <property type="entry name" value="2-Hacid_dh"/>
    <property type="match status" value="1"/>
</dbReference>
<dbReference type="Pfam" id="PF02826">
    <property type="entry name" value="2-Hacid_dh_C"/>
    <property type="match status" value="1"/>
</dbReference>
<dbReference type="SUPFAM" id="SSF52283">
    <property type="entry name" value="Formate/glycerate dehydrogenase catalytic domain-like"/>
    <property type="match status" value="1"/>
</dbReference>
<dbReference type="SUPFAM" id="SSF51735">
    <property type="entry name" value="NAD(P)-binding Rossmann-fold domains"/>
    <property type="match status" value="1"/>
</dbReference>
<dbReference type="PROSITE" id="PS00065">
    <property type="entry name" value="D_2_HYDROXYACID_DH_1"/>
    <property type="match status" value="1"/>
</dbReference>
<dbReference type="PROSITE" id="PS00670">
    <property type="entry name" value="D_2_HYDROXYACID_DH_2"/>
    <property type="match status" value="1"/>
</dbReference>
<dbReference type="PROSITE" id="PS00671">
    <property type="entry name" value="D_2_HYDROXYACID_DH_3"/>
    <property type="match status" value="1"/>
</dbReference>
<proteinExistence type="inferred from homology"/>
<protein>
    <recommendedName>
        <fullName evidence="1 2">Formate dehydrogenase</fullName>
        <shortName evidence="1">FDH</shortName>
        <ecNumber evidence="1">1.17.1.9</ecNumber>
    </recommendedName>
    <alternativeName>
        <fullName evidence="1">NAD-dependent formate dehydrogenase</fullName>
    </alternativeName>
</protein>
<sequence length="362" mass="39911">MKVVLVLYDAGKHAQDEERLYGCTENALGIRDWLEKQGHDVVVTSDKEGQNSVLEKNISDADVIISTPFHPAYITKERIDKAKKLKLLVVAGVGSDHIDLDYINQSGRDISVLEVTGSNVVSVAEHVVMTMLVLVRNFVPAHEQIISGGWNVAEIAKDSFDIEGKVIATIGAGRIGYRVLERLVAFNPKELLYYDYQSLSKEAEEKVGARRVHDIKELVAQADIVTINCPLHAGSKGLVNAELLKHFKKGAWLVNTARGAICVAEDVAAAVKSGQLRGYGGDVWFPQPAPKDHPWRSMANKYGAGNAMTPHYSGSVIDAQVRYAQGTKNILESFFTQKFDYRPQDIILLNGKYKTKSYGADK</sequence>
<evidence type="ECO:0000255" key="1">
    <source>
        <dbReference type="HAMAP-Rule" id="MF_03210"/>
    </source>
</evidence>
<evidence type="ECO:0000303" key="2">
    <source ref="1"/>
</evidence>
<evidence type="ECO:0000305" key="3"/>
<keyword id="KW-0963">Cytoplasm</keyword>
<keyword id="KW-0520">NAD</keyword>
<keyword id="KW-0560">Oxidoreductase</keyword>
<feature type="initiator methionine" description="Removed" evidence="3">
    <location>
        <position position="1"/>
    </location>
</feature>
<feature type="chain" id="PRO_0000076025" description="Formate dehydrogenase">
    <location>
        <begin position="2"/>
        <end position="362"/>
    </location>
</feature>
<feature type="binding site" evidence="1">
    <location>
        <position position="93"/>
    </location>
    <ligand>
        <name>substrate</name>
    </ligand>
</feature>
<feature type="binding site" evidence="1">
    <location>
        <position position="119"/>
    </location>
    <ligand>
        <name>substrate</name>
    </ligand>
</feature>
<feature type="binding site" evidence="1">
    <location>
        <begin position="174"/>
        <end position="175"/>
    </location>
    <ligand>
        <name>NAD(+)</name>
        <dbReference type="ChEBI" id="CHEBI:57540"/>
    </ligand>
</feature>
<feature type="binding site" evidence="1">
    <location>
        <position position="195"/>
    </location>
    <ligand>
        <name>NAD(+)</name>
        <dbReference type="ChEBI" id="CHEBI:57540"/>
    </ligand>
</feature>
<feature type="binding site" evidence="1">
    <location>
        <begin position="230"/>
        <end position="234"/>
    </location>
    <ligand>
        <name>NAD(+)</name>
        <dbReference type="ChEBI" id="CHEBI:57540"/>
    </ligand>
</feature>
<feature type="binding site" evidence="1">
    <location>
        <position position="256"/>
    </location>
    <ligand>
        <name>NAD(+)</name>
        <dbReference type="ChEBI" id="CHEBI:57540"/>
    </ligand>
</feature>
<feature type="binding site" evidence="1">
    <location>
        <position position="282"/>
    </location>
    <ligand>
        <name>NAD(+)</name>
        <dbReference type="ChEBI" id="CHEBI:57540"/>
    </ligand>
</feature>
<feature type="binding site" evidence="1">
    <location>
        <begin position="311"/>
        <end position="314"/>
    </location>
    <ligand>
        <name>NAD(+)</name>
        <dbReference type="ChEBI" id="CHEBI:57540"/>
    </ligand>
</feature>
<feature type="binding site" evidence="1">
    <location>
        <position position="357"/>
    </location>
    <ligand>
        <name>NAD(+)</name>
        <dbReference type="ChEBI" id="CHEBI:57540"/>
    </ligand>
</feature>
<feature type="site" description="Important for catalytic activity" evidence="1">
    <location>
        <position position="258"/>
    </location>
</feature>
<feature type="site" description="Important for catalytic activity" evidence="1">
    <location>
        <position position="311"/>
    </location>
</feature>
<name>FDH_PICAN</name>